<organism>
    <name type="scientific">Marinomonas sp. (strain MWYL1)</name>
    <dbReference type="NCBI Taxonomy" id="400668"/>
    <lineage>
        <taxon>Bacteria</taxon>
        <taxon>Pseudomonadati</taxon>
        <taxon>Pseudomonadota</taxon>
        <taxon>Gammaproteobacteria</taxon>
        <taxon>Oceanospirillales</taxon>
        <taxon>Oceanospirillaceae</taxon>
        <taxon>Marinomonas</taxon>
    </lineage>
</organism>
<accession>A6VZ85</accession>
<feature type="chain" id="PRO_1000080485" description="Gamma-glutamyl phosphate reductase">
    <location>
        <begin position="1"/>
        <end position="419"/>
    </location>
</feature>
<proteinExistence type="inferred from homology"/>
<reference key="1">
    <citation type="submission" date="2007-06" db="EMBL/GenBank/DDBJ databases">
        <title>Complete sequence of Marinomonas sp. MWYL1.</title>
        <authorList>
            <consortium name="US DOE Joint Genome Institute"/>
            <person name="Copeland A."/>
            <person name="Lucas S."/>
            <person name="Lapidus A."/>
            <person name="Barry K."/>
            <person name="Glavina del Rio T."/>
            <person name="Dalin E."/>
            <person name="Tice H."/>
            <person name="Pitluck S."/>
            <person name="Kiss H."/>
            <person name="Brettin T."/>
            <person name="Bruce D."/>
            <person name="Detter J.C."/>
            <person name="Han C."/>
            <person name="Schmutz J."/>
            <person name="Larimer F."/>
            <person name="Land M."/>
            <person name="Hauser L."/>
            <person name="Kyrpides N."/>
            <person name="Kim E."/>
            <person name="Johnston A.W.B."/>
            <person name="Todd J.D."/>
            <person name="Rogers R."/>
            <person name="Wexler M."/>
            <person name="Bond P.L."/>
            <person name="Li Y."/>
            <person name="Richardson P."/>
        </authorList>
    </citation>
    <scope>NUCLEOTIDE SEQUENCE [LARGE SCALE GENOMIC DNA]</scope>
    <source>
        <strain>MWYL1</strain>
    </source>
</reference>
<dbReference type="EC" id="1.2.1.41" evidence="1"/>
<dbReference type="EMBL" id="CP000749">
    <property type="protein sequence ID" value="ABR71764.1"/>
    <property type="molecule type" value="Genomic_DNA"/>
</dbReference>
<dbReference type="SMR" id="A6VZ85"/>
<dbReference type="STRING" id="400668.Mmwyl1_2852"/>
<dbReference type="KEGG" id="mmw:Mmwyl1_2852"/>
<dbReference type="eggNOG" id="COG0014">
    <property type="taxonomic scope" value="Bacteria"/>
</dbReference>
<dbReference type="HOGENOM" id="CLU_030231_0_0_6"/>
<dbReference type="OrthoDB" id="9809970at2"/>
<dbReference type="UniPathway" id="UPA00098">
    <property type="reaction ID" value="UER00360"/>
</dbReference>
<dbReference type="GO" id="GO:0005737">
    <property type="term" value="C:cytoplasm"/>
    <property type="evidence" value="ECO:0007669"/>
    <property type="project" value="UniProtKB-SubCell"/>
</dbReference>
<dbReference type="GO" id="GO:0004350">
    <property type="term" value="F:glutamate-5-semialdehyde dehydrogenase activity"/>
    <property type="evidence" value="ECO:0007669"/>
    <property type="project" value="UniProtKB-UniRule"/>
</dbReference>
<dbReference type="GO" id="GO:0050661">
    <property type="term" value="F:NADP binding"/>
    <property type="evidence" value="ECO:0007669"/>
    <property type="project" value="InterPro"/>
</dbReference>
<dbReference type="GO" id="GO:0055129">
    <property type="term" value="P:L-proline biosynthetic process"/>
    <property type="evidence" value="ECO:0007669"/>
    <property type="project" value="UniProtKB-UniRule"/>
</dbReference>
<dbReference type="CDD" id="cd07079">
    <property type="entry name" value="ALDH_F18-19_ProA-GPR"/>
    <property type="match status" value="1"/>
</dbReference>
<dbReference type="FunFam" id="3.40.309.10:FF:000006">
    <property type="entry name" value="Gamma-glutamyl phosphate reductase"/>
    <property type="match status" value="1"/>
</dbReference>
<dbReference type="Gene3D" id="3.40.605.10">
    <property type="entry name" value="Aldehyde Dehydrogenase, Chain A, domain 1"/>
    <property type="match status" value="1"/>
</dbReference>
<dbReference type="Gene3D" id="3.40.309.10">
    <property type="entry name" value="Aldehyde Dehydrogenase, Chain A, domain 2"/>
    <property type="match status" value="1"/>
</dbReference>
<dbReference type="HAMAP" id="MF_00412">
    <property type="entry name" value="ProA"/>
    <property type="match status" value="1"/>
</dbReference>
<dbReference type="InterPro" id="IPR016161">
    <property type="entry name" value="Ald_DH/histidinol_DH"/>
</dbReference>
<dbReference type="InterPro" id="IPR016163">
    <property type="entry name" value="Ald_DH_C"/>
</dbReference>
<dbReference type="InterPro" id="IPR016162">
    <property type="entry name" value="Ald_DH_N"/>
</dbReference>
<dbReference type="InterPro" id="IPR015590">
    <property type="entry name" value="Aldehyde_DH_dom"/>
</dbReference>
<dbReference type="InterPro" id="IPR020593">
    <property type="entry name" value="G-glutamylP_reductase_CS"/>
</dbReference>
<dbReference type="InterPro" id="IPR012134">
    <property type="entry name" value="Glu-5-SA_DH"/>
</dbReference>
<dbReference type="InterPro" id="IPR000965">
    <property type="entry name" value="GPR_dom"/>
</dbReference>
<dbReference type="NCBIfam" id="NF001221">
    <property type="entry name" value="PRK00197.1"/>
    <property type="match status" value="1"/>
</dbReference>
<dbReference type="NCBIfam" id="TIGR00407">
    <property type="entry name" value="proA"/>
    <property type="match status" value="1"/>
</dbReference>
<dbReference type="PANTHER" id="PTHR11063:SF8">
    <property type="entry name" value="DELTA-1-PYRROLINE-5-CARBOXYLATE SYNTHASE"/>
    <property type="match status" value="1"/>
</dbReference>
<dbReference type="PANTHER" id="PTHR11063">
    <property type="entry name" value="GLUTAMATE SEMIALDEHYDE DEHYDROGENASE"/>
    <property type="match status" value="1"/>
</dbReference>
<dbReference type="Pfam" id="PF00171">
    <property type="entry name" value="Aldedh"/>
    <property type="match status" value="1"/>
</dbReference>
<dbReference type="PIRSF" id="PIRSF000151">
    <property type="entry name" value="GPR"/>
    <property type="match status" value="1"/>
</dbReference>
<dbReference type="SUPFAM" id="SSF53720">
    <property type="entry name" value="ALDH-like"/>
    <property type="match status" value="1"/>
</dbReference>
<dbReference type="PROSITE" id="PS01223">
    <property type="entry name" value="PROA"/>
    <property type="match status" value="1"/>
</dbReference>
<gene>
    <name evidence="1" type="primary">proA</name>
    <name type="ordered locus">Mmwyl1_2852</name>
</gene>
<protein>
    <recommendedName>
        <fullName evidence="1">Gamma-glutamyl phosphate reductase</fullName>
        <shortName evidence="1">GPR</shortName>
        <ecNumber evidence="1">1.2.1.41</ecNumber>
    </recommendedName>
    <alternativeName>
        <fullName evidence="1">Glutamate-5-semialdehyde dehydrogenase</fullName>
    </alternativeName>
    <alternativeName>
        <fullName evidence="1">Glutamyl-gamma-semialdehyde dehydrogenase</fullName>
        <shortName evidence="1">GSA dehydrogenase</shortName>
    </alternativeName>
</protein>
<evidence type="ECO:0000255" key="1">
    <source>
        <dbReference type="HAMAP-Rule" id="MF_00412"/>
    </source>
</evidence>
<name>PROA_MARMS</name>
<sequence length="419" mass="45008">MSLESYMNQIGQQARAASRLLAKASTKQKNMALFAMAEALENARPRLVEENAKDMENGRAKGLDSALLDRLLLDDKRIDGMIEGLKQVASLPDPIGEISDMVYLPSGIQRGQMRVPLGVIGIIYESRPNVTIDAASLCLKSGNATILRGGSEAFYSNQAIAEAVTAGVVAAGLPEHAVQVLNTTDREAVGKLISMPEFVDVIVPRGGKGLIERISKDARVPVIKHLDGNCHVYIDDEADLDKAFAIAMNAKTRRYGVCNAMESLLVHASVAGDILPKLVFALQEKGVSLVGCDQVRSVSGEIGAATEEDWYTEYLAPKLSIKIVANMDEAIAHINKYGSHHTDAIVSQNYTKARAFMTEVDSSSVMVNASTSFADGFEYGFGAEIGISTDKIHARGPVGLLGLTSQKYVVLGDGHTRDN</sequence>
<comment type="function">
    <text evidence="1">Catalyzes the NADPH-dependent reduction of L-glutamate 5-phosphate into L-glutamate 5-semialdehyde and phosphate. The product spontaneously undergoes cyclization to form 1-pyrroline-5-carboxylate.</text>
</comment>
<comment type="catalytic activity">
    <reaction evidence="1">
        <text>L-glutamate 5-semialdehyde + phosphate + NADP(+) = L-glutamyl 5-phosphate + NADPH + H(+)</text>
        <dbReference type="Rhea" id="RHEA:19541"/>
        <dbReference type="ChEBI" id="CHEBI:15378"/>
        <dbReference type="ChEBI" id="CHEBI:43474"/>
        <dbReference type="ChEBI" id="CHEBI:57783"/>
        <dbReference type="ChEBI" id="CHEBI:58066"/>
        <dbReference type="ChEBI" id="CHEBI:58274"/>
        <dbReference type="ChEBI" id="CHEBI:58349"/>
        <dbReference type="EC" id="1.2.1.41"/>
    </reaction>
</comment>
<comment type="pathway">
    <text evidence="1">Amino-acid biosynthesis; L-proline biosynthesis; L-glutamate 5-semialdehyde from L-glutamate: step 2/2.</text>
</comment>
<comment type="subcellular location">
    <subcellularLocation>
        <location evidence="1">Cytoplasm</location>
    </subcellularLocation>
</comment>
<comment type="similarity">
    <text evidence="1">Belongs to the gamma-glutamyl phosphate reductase family.</text>
</comment>
<keyword id="KW-0028">Amino-acid biosynthesis</keyword>
<keyword id="KW-0963">Cytoplasm</keyword>
<keyword id="KW-0521">NADP</keyword>
<keyword id="KW-0560">Oxidoreductase</keyword>
<keyword id="KW-0641">Proline biosynthesis</keyword>